<sequence length="2126" mass="225776">MGLGSAASGTGADRGAWTLAEPRVTPVAVIGMACRLPGGIDSPELLWKALLRGDDLITEVPPDRWDCDEFYDPQPGVPGRTVCKWGGFLDNPADFDCEFFGIGEREAIAIDPQQRLLLETSWEAMEHAGLTQQTLAGSATGVFAGVTHGDYTMVAADAKQLEEPYGYLGNSFSMASGRVAYAMRLHGPAITVDTACSSGLTAVHMACRSLHEGESDVALAGGVALMLEPRKAAAGSALGMLSPTGRCRAFDVAADGFVSGEGCAVVVLKRLPDALADGDRILAVIRGTSANQDGHTVNIATPSQPAQVAAYRAALAAGGVDAATVGMVEAHGPGTPIGDPIEYASVSEVYGVDGPCALASVKTNFGHTQSTAGVLGLIKVVLALKHGVVPRNLHFTRLPDEIAGITTNLFVPEVTTPWPTNGRQVPRRAAVSSYGFSGTNVHAVVEQAPQTEAQPHAASTPPTGTPALFTLSASSADALRQTAQRLTDWIQQHADSLVLSDLAYTLARRRTHRSVRTAVIASSVDELIAGLGEVADGDTVYQPAVGQDDRGPVWLFSGQGSQWAAMGADLLTNESVFAATVAELEPLIAAESGFSVTEAMTAPETVTGIDRVQPTIFAMQVALAATMAAYGVRPGAVIGHSMGESAAAVVAGVLSAEDGVRVICRRSKLMATIAGSAAMASVELPALAVQSELTALGIDDVVVAVVTAPQSTVIAGGTESVRKLVDIWERRDVLARAVAVDVASHSPQVDPILDELIAALADLNPKAPEIPYYSATLFDPREAPACDARYWADNLRHTVRFSAAVRSALDDGYRVFAELSPHPLLTHAVDQIAGSVGMPVAALAGMRREQPLPLGLRRLLTDLHNAGAAVDFSVLCPQGRLVDAPLPAWSHRFLFYDREGVDNRSPGGSTVAVHPLLGAHVRLPEEPERHAWQADVGTATLPWLGDHRIHNVAALPGAAYCEMALSAARAVLGEQSEVRDMRFEAMLLLDDQTPVSTVATVTSPGVVDFAVEALQEGVGHHLRRASAVLQQVSGECEPPAYDMASLLEAHPCRVDGEDLRRQFDKHGVQYGPAFTGLAVAYVAEDATATMLAEVALPGSIRSQQGLYAIHPALLDACFQSVGAHPDSQSVGSGLLVPLGVRRVRAYAPVRTARYCYTRVTKVELVGVEADIDVLDAHGTVLLAVCGLRIGTGVSERDKHNRVLNERLLTIEWHQRELPEMDPSGAGKWLLISDCAASDVTATRLADAFREHSAACTTMRWPLHDDQLAAADQLRDQVGSDEFSGVVVLTGSNTGTPHQGSADRGAEYVRRLVGIARELSDLPGAVPRMYVVTRGAQRVLADDCVNLEQGGLRGLLRTIGAEHPHLRATQIDVDEQTGVEQLARQLLATSEEDETAWRDNEWYVARLCPTPLRPQERRTIVADHQQSGMRLQIRTPGDMQTIELAAFHRVPPGPGQIEVAVRASSVNFADVLIAFGRYPSFEGHLPQLGTDFAGVVTAVGPGVTDHKVGDHVGGMSPNGCWGTFVTCDARLAATLPPGLGDAQAAAVTTAHATAWYGLHELARIRAGDTVLIHSGTGGVGQAAIAIARAAGAEIFATAGTPQRRELLRNMGIEHVYDSRSIEFAEQIRRDTNGRGVDVVLNSVTGAAQLAGLKLLAFRGRFVEIGKRDIYGDTKLGLFPFRRNLSFYAVDLGLLSATHPEELRDLLGTVYRLTAAGELPMPQSTHYPLVEAATAIRVMGNAEHTGKLVLHIPQTGKSLVTLPPEQAQVFRPDGSYIITGGLGGLGLFLAEKMAAAGCGRIVLNSRTQPTQKMRETIEAIAAMGSEVVVECGDIAQPGTAERLVATAVATGLPVRGVLHAAAVVEDATLANITDELLARDWAPKVHGAWELHEATSGQPLDWFCLFSSAAALTGSPGQSAYSAANSWLDAFAHWRQAQGLPATAIAWGAWSDIGQLGWWSASPARASALEESNYTAITPDEGAYAFEALLRHNRVYTGYAPVIGAPWLVAFAERSRFFEVFSSSNGSGTSKFRVELNELPRDEWPARLRQLVAEQVSLILRRTVDPDRPLPEYGLDSLGALELRTRIETETGIRLAPKNVSATVRGLADHLYEQLAPDDAPAAALSSQ</sequence>
<protein>
    <recommendedName>
        <fullName evidence="3">Phthioceranic/hydroxyphthioceranic acid synthase</fullName>
        <ecNumber evidence="3">2.3.1.287</ecNumber>
    </recommendedName>
    <alternativeName>
        <fullName evidence="3">Polyketide synthase pks2</fullName>
    </alternativeName>
</protein>
<feature type="chain" id="PRO_0000426788" description="Phthioceranic/hydroxyphthioceranic acid synthase">
    <location>
        <begin position="1"/>
        <end position="2126"/>
    </location>
</feature>
<feature type="domain" description="Ketosynthase family 3 (KS3)" evidence="6">
    <location>
        <begin position="24"/>
        <end position="447"/>
    </location>
</feature>
<feature type="domain" description="PKS/mFAS DH" evidence="7">
    <location>
        <begin position="914"/>
        <end position="1198"/>
    </location>
</feature>
<feature type="domain" description="Carrier" evidence="5">
    <location>
        <begin position="2040"/>
        <end position="2126"/>
    </location>
</feature>
<feature type="region of interest" description="Linker domain (LD)" evidence="1">
    <location>
        <begin position="449"/>
        <end position="549"/>
    </location>
</feature>
<feature type="region of interest" description="Acyltransferase (AT)" evidence="1">
    <location>
        <begin position="550"/>
        <end position="849"/>
    </location>
</feature>
<feature type="region of interest" description="Dehydratase (DH)" evidence="1">
    <location>
        <begin position="909"/>
        <end position="1191"/>
    </location>
</feature>
<feature type="region of interest" description="N-terminal hotdog fold" evidence="7">
    <location>
        <begin position="914"/>
        <end position="1032"/>
    </location>
</feature>
<feature type="region of interest" description="C-terminal hotdog fold" evidence="7">
    <location>
        <begin position="1051"/>
        <end position="1198"/>
    </location>
</feature>
<feature type="region of interest" description="Pseudo beta-ketoacyl reductase (PsiKR)" evidence="1">
    <location>
        <begin position="1227"/>
        <end position="1398"/>
    </location>
</feature>
<feature type="region of interest" description="Enoylreductase (ER)" evidence="1">
    <location>
        <begin position="1426"/>
        <end position="1750"/>
    </location>
</feature>
<feature type="region of interest" description="Beta-ketoacyl reductase (KR)" evidence="1">
    <location>
        <begin position="1772"/>
        <end position="2019"/>
    </location>
</feature>
<feature type="active site" description="Acyl-thioester intermediate; for beta-ketoacyl synthase activity" evidence="6">
    <location>
        <position position="196"/>
    </location>
</feature>
<feature type="active site" description="For beta-ketoacyl synthase activity" evidence="6">
    <location>
        <position position="331"/>
    </location>
</feature>
<feature type="active site" description="For beta-ketoacyl synthase activity" evidence="6">
    <location>
        <position position="367"/>
    </location>
</feature>
<feature type="active site" description="Acyl-ester intermediate; for acyltransferase activity" evidence="1">
    <location>
        <position position="641"/>
    </location>
</feature>
<feature type="active site" description="Proton acceptor; for dehydratase activity" evidence="7">
    <location>
        <position position="947"/>
    </location>
</feature>
<feature type="active site" description="Proton donor; for dehydratase activity" evidence="7">
    <location>
        <position position="1115"/>
    </location>
</feature>
<feature type="binding site" evidence="4">
    <location>
        <begin position="1780"/>
        <end position="1783"/>
    </location>
    <ligand>
        <name>NADP(+)</name>
        <dbReference type="ChEBI" id="CHEBI:58349"/>
    </ligand>
</feature>
<feature type="binding site" evidence="4">
    <location>
        <begin position="1803"/>
        <end position="1806"/>
    </location>
    <ligand>
        <name>NADP(+)</name>
        <dbReference type="ChEBI" id="CHEBI:58349"/>
    </ligand>
</feature>
<feature type="binding site" evidence="4">
    <location>
        <begin position="1831"/>
        <end position="1832"/>
    </location>
    <ligand>
        <name>NADP(+)</name>
        <dbReference type="ChEBI" id="CHEBI:58349"/>
    </ligand>
</feature>
<feature type="binding site" evidence="4">
    <location>
        <begin position="1904"/>
        <end position="1905"/>
    </location>
    <ligand>
        <name>NADP(+)</name>
        <dbReference type="ChEBI" id="CHEBI:58349"/>
    </ligand>
</feature>
<feature type="modified residue" description="O-(pantetheine 4'-phosphoryl)serine" evidence="5">
    <location>
        <position position="2075"/>
    </location>
</feature>
<reference key="1">
    <citation type="journal article" date="2002" name="J. Bacteriol.">
        <title>Whole-genome comparison of Mycobacterium tuberculosis clinical and laboratory strains.</title>
        <authorList>
            <person name="Fleischmann R.D."/>
            <person name="Alland D."/>
            <person name="Eisen J.A."/>
            <person name="Carpenter L."/>
            <person name="White O."/>
            <person name="Peterson J.D."/>
            <person name="DeBoy R.T."/>
            <person name="Dodson R.J."/>
            <person name="Gwinn M.L."/>
            <person name="Haft D.H."/>
            <person name="Hickey E.K."/>
            <person name="Kolonay J.F."/>
            <person name="Nelson W.C."/>
            <person name="Umayam L.A."/>
            <person name="Ermolaeva M.D."/>
            <person name="Salzberg S.L."/>
            <person name="Delcher A."/>
            <person name="Utterback T.R."/>
            <person name="Weidman J.F."/>
            <person name="Khouri H.M."/>
            <person name="Gill J."/>
            <person name="Mikula A."/>
            <person name="Bishai W."/>
            <person name="Jacobs W.R. Jr."/>
            <person name="Venter J.C."/>
            <person name="Fraser C.M."/>
        </authorList>
    </citation>
    <scope>NUCLEOTIDE SEQUENCE [LARGE SCALE GENOMIC DNA]</scope>
    <source>
        <strain>CDC 1551 / Oshkosh</strain>
    </source>
</reference>
<comment type="function">
    <text evidence="3">Involved in sulfolipid-1 biosynthesis. Catalyzes the synthesis of the hepta- and octamethyl phthioceranic and hydroxyphthioceranic acids, the methyl-branched acyl constituents of sulfolipids.</text>
</comment>
<comment type="catalytic activity">
    <reaction evidence="3">
        <text>hexadecanoyl-[(hydroxy)phthioceranic acid synthase] + 7 (S)-methylmalonyl-CoA + 14 NADPH + 21 H(+) = C37-phthioceranyl-[(hydroxy)phthioceranic acid synthase] + 7 CO2 + 14 NADP(+) + 7 CoA + 7 H2O</text>
        <dbReference type="Rhea" id="RHEA:58908"/>
        <dbReference type="Rhea" id="RHEA-COMP:15244"/>
        <dbReference type="Rhea" id="RHEA-COMP:15246"/>
        <dbReference type="ChEBI" id="CHEBI:15377"/>
        <dbReference type="ChEBI" id="CHEBI:15378"/>
        <dbReference type="ChEBI" id="CHEBI:16526"/>
        <dbReference type="ChEBI" id="CHEBI:57287"/>
        <dbReference type="ChEBI" id="CHEBI:57327"/>
        <dbReference type="ChEBI" id="CHEBI:57783"/>
        <dbReference type="ChEBI" id="CHEBI:58349"/>
        <dbReference type="ChEBI" id="CHEBI:78483"/>
        <dbReference type="ChEBI" id="CHEBI:142473"/>
        <dbReference type="EC" id="2.3.1.287"/>
    </reaction>
</comment>
<comment type="catalytic activity">
    <reaction evidence="3">
        <text>hexadecanoyl-[(hydroxy)phthioceranic acid synthase] + 8 (S)-methylmalonyl-CoA + 16 NADPH + 24 H(+) = C40-phthioceranyl-[(hydroxy)phthioceranic acid synthase] + 8 CO2 + 16 NADP(+) + 8 CoA + 8 H2O</text>
        <dbReference type="Rhea" id="RHEA:58904"/>
        <dbReference type="Rhea" id="RHEA-COMP:15244"/>
        <dbReference type="Rhea" id="RHEA-COMP:15245"/>
        <dbReference type="ChEBI" id="CHEBI:15377"/>
        <dbReference type="ChEBI" id="CHEBI:15378"/>
        <dbReference type="ChEBI" id="CHEBI:16526"/>
        <dbReference type="ChEBI" id="CHEBI:57287"/>
        <dbReference type="ChEBI" id="CHEBI:57327"/>
        <dbReference type="ChEBI" id="CHEBI:57783"/>
        <dbReference type="ChEBI" id="CHEBI:58349"/>
        <dbReference type="ChEBI" id="CHEBI:78483"/>
        <dbReference type="ChEBI" id="CHEBI:142472"/>
        <dbReference type="EC" id="2.3.1.287"/>
    </reaction>
</comment>
<comment type="cofactor">
    <cofactor evidence="2">
        <name>pantetheine 4'-phosphate</name>
        <dbReference type="ChEBI" id="CHEBI:47942"/>
    </cofactor>
    <text evidence="2">Binds 1 phosphopantetheine covalently.</text>
</comment>
<comment type="pathway">
    <text evidence="3">Lipid metabolism; fatty acid biosynthesis.</text>
</comment>
<comment type="pathway">
    <text evidence="3">Glycolipid metabolism; sulfolipid-1 biosynthesis.</text>
</comment>
<gene>
    <name type="primary">pks2</name>
    <name type="synonym">msl-2</name>
    <name type="ordered locus">MT3933</name>
</gene>
<keyword id="KW-0012">Acyltransferase</keyword>
<keyword id="KW-0275">Fatty acid biosynthesis</keyword>
<keyword id="KW-0276">Fatty acid metabolism</keyword>
<keyword id="KW-0444">Lipid biosynthesis</keyword>
<keyword id="KW-0443">Lipid metabolism</keyword>
<keyword id="KW-0511">Multifunctional enzyme</keyword>
<keyword id="KW-0521">NADP</keyword>
<keyword id="KW-0596">Phosphopantetheine</keyword>
<keyword id="KW-0597">Phosphoprotein</keyword>
<keyword id="KW-1185">Reference proteome</keyword>
<keyword id="KW-0808">Transferase</keyword>
<accession>P9WQE8</accession>
<accession>L0TDW7</accession>
<accession>O07798</accession>
<accession>Q7D4T0</accession>
<name>PHAS_MYCTO</name>
<proteinExistence type="inferred from homology"/>
<dbReference type="EC" id="2.3.1.287" evidence="3"/>
<dbReference type="EMBL" id="AE000516">
    <property type="protein sequence ID" value="AAK48300.1"/>
    <property type="molecule type" value="Genomic_DNA"/>
</dbReference>
<dbReference type="PIR" id="E70522">
    <property type="entry name" value="E70522"/>
</dbReference>
<dbReference type="RefSeq" id="WP_003900763.1">
    <property type="nucleotide sequence ID" value="NZ_KK341227.1"/>
</dbReference>
<dbReference type="SMR" id="P9WQE8"/>
<dbReference type="KEGG" id="mtc:MT3933"/>
<dbReference type="PATRIC" id="fig|83331.31.peg.4231"/>
<dbReference type="HOGENOM" id="CLU_000022_35_5_11"/>
<dbReference type="UniPathway" id="UPA00094"/>
<dbReference type="UniPathway" id="UPA01063"/>
<dbReference type="Proteomes" id="UP000001020">
    <property type="component" value="Chromosome"/>
</dbReference>
<dbReference type="GO" id="GO:0005737">
    <property type="term" value="C:cytoplasm"/>
    <property type="evidence" value="ECO:0007669"/>
    <property type="project" value="TreeGrafter"/>
</dbReference>
<dbReference type="GO" id="GO:0005886">
    <property type="term" value="C:plasma membrane"/>
    <property type="evidence" value="ECO:0007669"/>
    <property type="project" value="TreeGrafter"/>
</dbReference>
<dbReference type="GO" id="GO:0004315">
    <property type="term" value="F:3-oxoacyl-[acyl-carrier-protein] synthase activity"/>
    <property type="evidence" value="ECO:0007669"/>
    <property type="project" value="InterPro"/>
</dbReference>
<dbReference type="GO" id="GO:0004312">
    <property type="term" value="F:fatty acid synthase activity"/>
    <property type="evidence" value="ECO:0007669"/>
    <property type="project" value="TreeGrafter"/>
</dbReference>
<dbReference type="GO" id="GO:0016491">
    <property type="term" value="F:oxidoreductase activity"/>
    <property type="evidence" value="ECO:0007669"/>
    <property type="project" value="InterPro"/>
</dbReference>
<dbReference type="GO" id="GO:0031177">
    <property type="term" value="F:phosphopantetheine binding"/>
    <property type="evidence" value="ECO:0007669"/>
    <property type="project" value="InterPro"/>
</dbReference>
<dbReference type="GO" id="GO:0071770">
    <property type="term" value="P:DIM/DIP cell wall layer assembly"/>
    <property type="evidence" value="ECO:0007669"/>
    <property type="project" value="TreeGrafter"/>
</dbReference>
<dbReference type="GO" id="GO:0006633">
    <property type="term" value="P:fatty acid biosynthetic process"/>
    <property type="evidence" value="ECO:0007669"/>
    <property type="project" value="UniProtKB-UniPathway"/>
</dbReference>
<dbReference type="CDD" id="cd05195">
    <property type="entry name" value="enoyl_red"/>
    <property type="match status" value="1"/>
</dbReference>
<dbReference type="CDD" id="cd08955">
    <property type="entry name" value="KR_2_FAS_SDR_x"/>
    <property type="match status" value="1"/>
</dbReference>
<dbReference type="CDD" id="cd00833">
    <property type="entry name" value="PKS"/>
    <property type="match status" value="1"/>
</dbReference>
<dbReference type="FunFam" id="1.10.1200.10:FF:000014">
    <property type="entry name" value="Multifunctional mycocerosic acid synthase"/>
    <property type="match status" value="1"/>
</dbReference>
<dbReference type="FunFam" id="3.10.129.110:FF:000004">
    <property type="entry name" value="Multifunctional mycocerosic acid synthase"/>
    <property type="match status" value="1"/>
</dbReference>
<dbReference type="FunFam" id="3.40.50.720:FF:000416">
    <property type="entry name" value="Multifunctional mycocerosic acid synthase"/>
    <property type="match status" value="1"/>
</dbReference>
<dbReference type="FunFam" id="3.40.50.720:FF:000372">
    <property type="entry name" value="Mycocerosic acid synthase-like polyketide synthase"/>
    <property type="match status" value="1"/>
</dbReference>
<dbReference type="FunFam" id="3.30.70.250:FF:000003">
    <property type="entry name" value="Polyketide beta-ketoacyl synthase Pks3"/>
    <property type="match status" value="1"/>
</dbReference>
<dbReference type="FunFam" id="3.40.50.720:FF:000209">
    <property type="entry name" value="Polyketide synthase Pks12"/>
    <property type="match status" value="1"/>
</dbReference>
<dbReference type="FunFam" id="3.40.47.10:FF:000019">
    <property type="entry name" value="Polyketide synthase type I"/>
    <property type="match status" value="1"/>
</dbReference>
<dbReference type="Gene3D" id="3.40.47.10">
    <property type="match status" value="1"/>
</dbReference>
<dbReference type="Gene3D" id="1.10.1200.10">
    <property type="entry name" value="ACP-like"/>
    <property type="match status" value="1"/>
</dbReference>
<dbReference type="Gene3D" id="3.30.70.250">
    <property type="entry name" value="Malonyl-CoA ACP transacylase, ACP-binding"/>
    <property type="match status" value="1"/>
</dbReference>
<dbReference type="Gene3D" id="3.40.366.10">
    <property type="entry name" value="Malonyl-Coenzyme A Acyl Carrier Protein, domain 2"/>
    <property type="match status" value="1"/>
</dbReference>
<dbReference type="Gene3D" id="3.90.180.10">
    <property type="entry name" value="Medium-chain alcohol dehydrogenases, catalytic domain"/>
    <property type="match status" value="1"/>
</dbReference>
<dbReference type="Gene3D" id="3.40.50.720">
    <property type="entry name" value="NAD(P)-binding Rossmann-like Domain"/>
    <property type="match status" value="2"/>
</dbReference>
<dbReference type="Gene3D" id="3.10.129.110">
    <property type="entry name" value="Polyketide synthase dehydratase"/>
    <property type="match status" value="1"/>
</dbReference>
<dbReference type="InterPro" id="IPR001227">
    <property type="entry name" value="Ac_transferase_dom_sf"/>
</dbReference>
<dbReference type="InterPro" id="IPR036736">
    <property type="entry name" value="ACP-like_sf"/>
</dbReference>
<dbReference type="InterPro" id="IPR014043">
    <property type="entry name" value="Acyl_transferase_dom"/>
</dbReference>
<dbReference type="InterPro" id="IPR016035">
    <property type="entry name" value="Acyl_Trfase/lysoPLipase"/>
</dbReference>
<dbReference type="InterPro" id="IPR013149">
    <property type="entry name" value="ADH-like_C"/>
</dbReference>
<dbReference type="InterPro" id="IPR013154">
    <property type="entry name" value="ADH-like_N"/>
</dbReference>
<dbReference type="InterPro" id="IPR011032">
    <property type="entry name" value="GroES-like_sf"/>
</dbReference>
<dbReference type="InterPro" id="IPR018201">
    <property type="entry name" value="Ketoacyl_synth_AS"/>
</dbReference>
<dbReference type="InterPro" id="IPR014031">
    <property type="entry name" value="Ketoacyl_synth_C"/>
</dbReference>
<dbReference type="InterPro" id="IPR014030">
    <property type="entry name" value="Ketoacyl_synth_N"/>
</dbReference>
<dbReference type="InterPro" id="IPR016036">
    <property type="entry name" value="Malonyl_transacylase_ACP-bd"/>
</dbReference>
<dbReference type="InterPro" id="IPR053386">
    <property type="entry name" value="MBFA_synthase"/>
</dbReference>
<dbReference type="InterPro" id="IPR036291">
    <property type="entry name" value="NAD(P)-bd_dom_sf"/>
</dbReference>
<dbReference type="InterPro" id="IPR032821">
    <property type="entry name" value="PKS_assoc"/>
</dbReference>
<dbReference type="InterPro" id="IPR020841">
    <property type="entry name" value="PKS_Beta-ketoAc_synthase_dom"/>
</dbReference>
<dbReference type="InterPro" id="IPR042104">
    <property type="entry name" value="PKS_dehydratase_sf"/>
</dbReference>
<dbReference type="InterPro" id="IPR020807">
    <property type="entry name" value="PKS_DH"/>
</dbReference>
<dbReference type="InterPro" id="IPR049551">
    <property type="entry name" value="PKS_DH_C"/>
</dbReference>
<dbReference type="InterPro" id="IPR049552">
    <property type="entry name" value="PKS_DH_N"/>
</dbReference>
<dbReference type="InterPro" id="IPR020843">
    <property type="entry name" value="PKS_ER"/>
</dbReference>
<dbReference type="InterPro" id="IPR013968">
    <property type="entry name" value="PKS_KR"/>
</dbReference>
<dbReference type="InterPro" id="IPR049900">
    <property type="entry name" value="PKS_mFAS_DH"/>
</dbReference>
<dbReference type="InterPro" id="IPR050091">
    <property type="entry name" value="PKS_NRPS_Biosynth_Enz"/>
</dbReference>
<dbReference type="InterPro" id="IPR020806">
    <property type="entry name" value="PKS_PP-bd"/>
</dbReference>
<dbReference type="InterPro" id="IPR009081">
    <property type="entry name" value="PP-bd_ACP"/>
</dbReference>
<dbReference type="InterPro" id="IPR006162">
    <property type="entry name" value="Ppantetheine_attach_site"/>
</dbReference>
<dbReference type="InterPro" id="IPR016039">
    <property type="entry name" value="Thiolase-like"/>
</dbReference>
<dbReference type="NCBIfam" id="NF041183">
    <property type="entry name" value="Pks2_ls1_myc"/>
    <property type="match status" value="1"/>
</dbReference>
<dbReference type="PANTHER" id="PTHR43775">
    <property type="entry name" value="FATTY ACID SYNTHASE"/>
    <property type="match status" value="1"/>
</dbReference>
<dbReference type="PANTHER" id="PTHR43775:SF37">
    <property type="entry name" value="SI:DKEY-61P9.11"/>
    <property type="match status" value="1"/>
</dbReference>
<dbReference type="Pfam" id="PF00698">
    <property type="entry name" value="Acyl_transf_1"/>
    <property type="match status" value="1"/>
</dbReference>
<dbReference type="Pfam" id="PF08240">
    <property type="entry name" value="ADH_N"/>
    <property type="match status" value="1"/>
</dbReference>
<dbReference type="Pfam" id="PF00107">
    <property type="entry name" value="ADH_zinc_N"/>
    <property type="match status" value="1"/>
</dbReference>
<dbReference type="Pfam" id="PF16197">
    <property type="entry name" value="KAsynt_C_assoc"/>
    <property type="match status" value="1"/>
</dbReference>
<dbReference type="Pfam" id="PF00109">
    <property type="entry name" value="ketoacyl-synt"/>
    <property type="match status" value="1"/>
</dbReference>
<dbReference type="Pfam" id="PF02801">
    <property type="entry name" value="Ketoacyl-synt_C"/>
    <property type="match status" value="1"/>
</dbReference>
<dbReference type="Pfam" id="PF08659">
    <property type="entry name" value="KR"/>
    <property type="match status" value="1"/>
</dbReference>
<dbReference type="Pfam" id="PF21089">
    <property type="entry name" value="PKS_DH_N"/>
    <property type="match status" value="1"/>
</dbReference>
<dbReference type="Pfam" id="PF00550">
    <property type="entry name" value="PP-binding"/>
    <property type="match status" value="1"/>
</dbReference>
<dbReference type="Pfam" id="PF14765">
    <property type="entry name" value="PS-DH"/>
    <property type="match status" value="1"/>
</dbReference>
<dbReference type="SMART" id="SM00827">
    <property type="entry name" value="PKS_AT"/>
    <property type="match status" value="1"/>
</dbReference>
<dbReference type="SMART" id="SM00826">
    <property type="entry name" value="PKS_DH"/>
    <property type="match status" value="1"/>
</dbReference>
<dbReference type="SMART" id="SM00829">
    <property type="entry name" value="PKS_ER"/>
    <property type="match status" value="1"/>
</dbReference>
<dbReference type="SMART" id="SM00822">
    <property type="entry name" value="PKS_KR"/>
    <property type="match status" value="1"/>
</dbReference>
<dbReference type="SMART" id="SM00825">
    <property type="entry name" value="PKS_KS"/>
    <property type="match status" value="1"/>
</dbReference>
<dbReference type="SMART" id="SM00823">
    <property type="entry name" value="PKS_PP"/>
    <property type="match status" value="1"/>
</dbReference>
<dbReference type="SUPFAM" id="SSF47336">
    <property type="entry name" value="ACP-like"/>
    <property type="match status" value="1"/>
</dbReference>
<dbReference type="SUPFAM" id="SSF52151">
    <property type="entry name" value="FabD/lysophospholipase-like"/>
    <property type="match status" value="1"/>
</dbReference>
<dbReference type="SUPFAM" id="SSF50129">
    <property type="entry name" value="GroES-like"/>
    <property type="match status" value="1"/>
</dbReference>
<dbReference type="SUPFAM" id="SSF51735">
    <property type="entry name" value="NAD(P)-binding Rossmann-fold domains"/>
    <property type="match status" value="3"/>
</dbReference>
<dbReference type="SUPFAM" id="SSF55048">
    <property type="entry name" value="Probable ACP-binding domain of malonyl-CoA ACP transacylase"/>
    <property type="match status" value="1"/>
</dbReference>
<dbReference type="SUPFAM" id="SSF53901">
    <property type="entry name" value="Thiolase-like"/>
    <property type="match status" value="1"/>
</dbReference>
<dbReference type="PROSITE" id="PS50075">
    <property type="entry name" value="CARRIER"/>
    <property type="match status" value="1"/>
</dbReference>
<dbReference type="PROSITE" id="PS00606">
    <property type="entry name" value="KS3_1"/>
    <property type="match status" value="1"/>
</dbReference>
<dbReference type="PROSITE" id="PS52004">
    <property type="entry name" value="KS3_2"/>
    <property type="match status" value="1"/>
</dbReference>
<dbReference type="PROSITE" id="PS00012">
    <property type="entry name" value="PHOSPHOPANTETHEINE"/>
    <property type="match status" value="1"/>
</dbReference>
<dbReference type="PROSITE" id="PS52019">
    <property type="entry name" value="PKS_MFAS_DH"/>
    <property type="match status" value="1"/>
</dbReference>
<organism>
    <name type="scientific">Mycobacterium tuberculosis (strain CDC 1551 / Oshkosh)</name>
    <dbReference type="NCBI Taxonomy" id="83331"/>
    <lineage>
        <taxon>Bacteria</taxon>
        <taxon>Bacillati</taxon>
        <taxon>Actinomycetota</taxon>
        <taxon>Actinomycetes</taxon>
        <taxon>Mycobacteriales</taxon>
        <taxon>Mycobacteriaceae</taxon>
        <taxon>Mycobacterium</taxon>
        <taxon>Mycobacterium tuberculosis complex</taxon>
    </lineage>
</organism>
<evidence type="ECO:0000250" key="1">
    <source>
        <dbReference type="UniProtKB" id="A0R1E8"/>
    </source>
</evidence>
<evidence type="ECO:0000250" key="2">
    <source>
        <dbReference type="UniProtKB" id="P96202"/>
    </source>
</evidence>
<evidence type="ECO:0000250" key="3">
    <source>
        <dbReference type="UniProtKB" id="P9WQE9"/>
    </source>
</evidence>
<evidence type="ECO:0000250" key="4">
    <source>
        <dbReference type="UniProtKB" id="Q03131"/>
    </source>
</evidence>
<evidence type="ECO:0000255" key="5">
    <source>
        <dbReference type="PROSITE-ProRule" id="PRU00258"/>
    </source>
</evidence>
<evidence type="ECO:0000255" key="6">
    <source>
        <dbReference type="PROSITE-ProRule" id="PRU01348"/>
    </source>
</evidence>
<evidence type="ECO:0000255" key="7">
    <source>
        <dbReference type="PROSITE-ProRule" id="PRU01363"/>
    </source>
</evidence>